<reference key="1">
    <citation type="journal article" date="1993" name="J. Mol. Evol.">
        <title>Evolution of avian metallothionein: DNA sequence analyses of the turkey metallothionein gene and metallothionein cDNAs from pheasant and quail.</title>
        <authorList>
            <person name="Shartzer K.L."/>
            <person name="Kage K."/>
            <person name="Sobieski R.J."/>
            <person name="Andrews G.K."/>
        </authorList>
    </citation>
    <scope>NUCLEOTIDE SEQUENCE [MRNA]</scope>
    <source>
        <tissue>Liver</tissue>
    </source>
</reference>
<protein>
    <recommendedName>
        <fullName>Metallothionein</fullName>
        <shortName>MT</shortName>
    </recommendedName>
</protein>
<evidence type="ECO:0000250" key="1">
    <source>
        <dbReference type="UniProtKB" id="P02795"/>
    </source>
</evidence>
<evidence type="ECO:0000305" key="2"/>
<feature type="chain" id="PRO_0000197266" description="Metallothionein">
    <location>
        <begin position="1" status="less than"/>
        <end position="49"/>
    </location>
</feature>
<feature type="region of interest" description="Beta">
    <location>
        <begin position="1"/>
        <end position="16"/>
    </location>
</feature>
<feature type="region of interest" description="Alpha">
    <location>
        <begin position="17"/>
        <end position="49"/>
    </location>
</feature>
<feature type="binding site" evidence="1">
    <location>
        <position position="2"/>
    </location>
    <ligand>
        <name>a divalent metal cation</name>
        <dbReference type="ChEBI" id="CHEBI:60240"/>
        <label>2</label>
        <note>in cluster B</note>
    </ligand>
</feature>
<feature type="binding site" evidence="1">
    <location>
        <position position="2"/>
    </location>
    <ligand>
        <name>a divalent metal cation</name>
        <dbReference type="ChEBI" id="CHEBI:60240"/>
        <label>3</label>
        <note>in cluster B</note>
    </ligand>
</feature>
<feature type="binding site" evidence="1">
    <location>
        <position position="6"/>
    </location>
    <ligand>
        <name>a divalent metal cation</name>
        <dbReference type="ChEBI" id="CHEBI:60240"/>
        <label>3</label>
        <note>in cluster B</note>
    </ligand>
</feature>
<feature type="binding site" evidence="1">
    <location>
        <position position="8"/>
    </location>
    <ligand>
        <name>a divalent metal cation</name>
        <dbReference type="ChEBI" id="CHEBI:60240"/>
        <label>1</label>
        <note>in cluster B</note>
    </ligand>
</feature>
<feature type="binding site" evidence="1">
    <location>
        <position position="11"/>
    </location>
    <ligand>
        <name>a divalent metal cation</name>
        <dbReference type="ChEBI" id="CHEBI:60240"/>
        <label>1</label>
        <note>in cluster B</note>
    </ligand>
</feature>
<feature type="binding site" evidence="1">
    <location>
        <position position="11"/>
    </location>
    <ligand>
        <name>a divalent metal cation</name>
        <dbReference type="ChEBI" id="CHEBI:60240"/>
        <label>3</label>
        <note>in cluster B</note>
    </ligand>
</feature>
<feature type="binding site" evidence="1">
    <location>
        <position position="13"/>
    </location>
    <ligand>
        <name>a divalent metal cation</name>
        <dbReference type="ChEBI" id="CHEBI:60240"/>
        <label>2</label>
        <note>in cluster B</note>
    </ligand>
</feature>
<feature type="binding site" evidence="1">
    <location>
        <position position="16"/>
    </location>
    <ligand>
        <name>a divalent metal cation</name>
        <dbReference type="ChEBI" id="CHEBI:60240"/>
        <label>3</label>
        <note>in cluster B</note>
    </ligand>
</feature>
<feature type="binding site" evidence="1">
    <location>
        <position position="20"/>
    </location>
    <ligand>
        <name>a divalent metal cation</name>
        <dbReference type="ChEBI" id="CHEBI:60240"/>
        <label>4</label>
        <note>in cluster A</note>
    </ligand>
</feature>
<feature type="binding site" evidence="1">
    <location>
        <position position="21"/>
    </location>
    <ligand>
        <name>a divalent metal cation</name>
        <dbReference type="ChEBI" id="CHEBI:60240"/>
        <label>4</label>
        <note>in cluster A</note>
    </ligand>
</feature>
<feature type="binding site" evidence="1">
    <location>
        <position position="21"/>
    </location>
    <ligand>
        <name>a divalent metal cation</name>
        <dbReference type="ChEBI" id="CHEBI:60240"/>
        <label>5</label>
        <note>in cluster A</note>
    </ligand>
</feature>
<feature type="binding site" evidence="1">
    <location>
        <position position="23"/>
    </location>
    <ligand>
        <name>a divalent metal cation</name>
        <dbReference type="ChEBI" id="CHEBI:60240"/>
        <label>5</label>
        <note>in cluster A</note>
    </ligand>
</feature>
<feature type="binding site" evidence="1">
    <location>
        <position position="24"/>
    </location>
    <ligand>
        <name>a divalent metal cation</name>
        <dbReference type="ChEBI" id="CHEBI:60240"/>
        <label>5</label>
        <note>in cluster A</note>
    </ligand>
</feature>
<feature type="binding site" evidence="1">
    <location>
        <position position="24"/>
    </location>
    <ligand>
        <name>a divalent metal cation</name>
        <dbReference type="ChEBI" id="CHEBI:60240"/>
        <label>6</label>
        <note>in cluster A</note>
    </ligand>
</feature>
<feature type="binding site" evidence="1">
    <location>
        <position position="28"/>
    </location>
    <ligand>
        <name>a divalent metal cation</name>
        <dbReference type="ChEBI" id="CHEBI:60240"/>
        <label>6</label>
        <note>in cluster A</note>
    </ligand>
</feature>
<feature type="binding site" evidence="1">
    <location>
        <position position="31"/>
    </location>
    <ligand>
        <name>a divalent metal cation</name>
        <dbReference type="ChEBI" id="CHEBI:60240"/>
        <label>4</label>
        <note>in cluster A</note>
    </ligand>
</feature>
<feature type="binding site" evidence="1">
    <location>
        <position position="31"/>
    </location>
    <ligand>
        <name>a divalent metal cation</name>
        <dbReference type="ChEBI" id="CHEBI:60240"/>
        <label>6</label>
        <note>in cluster A</note>
    </ligand>
</feature>
<feature type="binding site" evidence="1">
    <location>
        <position position="35"/>
    </location>
    <ligand>
        <name>a divalent metal cation</name>
        <dbReference type="ChEBI" id="CHEBI:60240"/>
        <label>4</label>
        <note>in cluster A</note>
    </ligand>
</feature>
<feature type="binding site" evidence="1">
    <location>
        <position position="37"/>
    </location>
    <ligand>
        <name>a divalent metal cation</name>
        <dbReference type="ChEBI" id="CHEBI:60240"/>
        <label>5</label>
        <note>in cluster A</note>
    </ligand>
</feature>
<feature type="binding site" evidence="1">
    <location>
        <position position="37"/>
    </location>
    <ligand>
        <name>a divalent metal cation</name>
        <dbReference type="ChEBI" id="CHEBI:60240"/>
        <label>7</label>
        <note>in cluster A</note>
    </ligand>
</feature>
<feature type="binding site" evidence="1">
    <location>
        <position position="45"/>
    </location>
    <ligand>
        <name>a divalent metal cation</name>
        <dbReference type="ChEBI" id="CHEBI:60240"/>
        <label>7</label>
        <note>in cluster A</note>
    </ligand>
</feature>
<feature type="binding site" evidence="1">
    <location>
        <position position="47"/>
    </location>
    <ligand>
        <name>a divalent metal cation</name>
        <dbReference type="ChEBI" id="CHEBI:60240"/>
        <label>7</label>
        <note>in cluster A</note>
    </ligand>
</feature>
<feature type="binding site" evidence="1">
    <location>
        <position position="48"/>
    </location>
    <ligand>
        <name>a divalent metal cation</name>
        <dbReference type="ChEBI" id="CHEBI:60240"/>
        <label>6</label>
        <note>in cluster A</note>
    </ligand>
</feature>
<feature type="binding site" evidence="1">
    <location>
        <position position="48"/>
    </location>
    <ligand>
        <name>a divalent metal cation</name>
        <dbReference type="ChEBI" id="CHEBI:60240"/>
        <label>7</label>
        <note>in cluster A</note>
    </ligand>
</feature>
<feature type="non-terminal residue">
    <location>
        <position position="1"/>
    </location>
</feature>
<accession>P68499</accession>
<accession>P09576</accession>
<name>MT_PHACO</name>
<keyword id="KW-0479">Metal-binding</keyword>
<keyword id="KW-0480">Metal-thiolate cluster</keyword>
<keyword id="KW-0862">Zinc</keyword>
<organism>
    <name type="scientific">Phasianus colchicus colchicus</name>
    <name type="common">Black-necked pheasant</name>
    <dbReference type="NCBI Taxonomy" id="9057"/>
    <lineage>
        <taxon>Eukaryota</taxon>
        <taxon>Metazoa</taxon>
        <taxon>Chordata</taxon>
        <taxon>Craniata</taxon>
        <taxon>Vertebrata</taxon>
        <taxon>Euteleostomi</taxon>
        <taxon>Archelosauria</taxon>
        <taxon>Archosauria</taxon>
        <taxon>Dinosauria</taxon>
        <taxon>Saurischia</taxon>
        <taxon>Theropoda</taxon>
        <taxon>Coelurosauria</taxon>
        <taxon>Aves</taxon>
        <taxon>Neognathae</taxon>
        <taxon>Galloanserae</taxon>
        <taxon>Galliformes</taxon>
        <taxon>Phasianidae</taxon>
        <taxon>Phasianinae</taxon>
        <taxon>Phasianus</taxon>
    </lineage>
</organism>
<sequence length="49" mass="5063">SCAGSCKCKNCRCRSCRKSCCSCCPAGCNNCAKGCVCKEPASSKCSCCH</sequence>
<comment type="function">
    <text>Metallothioneins have a high content of cysteine residues that bind various heavy metals.</text>
</comment>
<comment type="domain">
    <text>Class I metallothioneins contain 2 metal-binding domains: four divalent ions are chelated within cluster A of the alpha domain and are coordinated via cysteinyl thiolate bridges to 11 cysteine ligands. Cluster B, the corresponding region within the beta domain, can ligate three divalent ions to 9 cysteines.</text>
</comment>
<comment type="similarity">
    <text evidence="2">Belongs to the metallothionein superfamily. Type 1 family.</text>
</comment>
<dbReference type="EMBL" id="X62510">
    <property type="protein sequence ID" value="CAA44369.1"/>
    <property type="molecule type" value="mRNA"/>
</dbReference>
<dbReference type="SMR" id="P68499"/>
<dbReference type="GO" id="GO:0005737">
    <property type="term" value="C:cytoplasm"/>
    <property type="evidence" value="ECO:0007669"/>
    <property type="project" value="TreeGrafter"/>
</dbReference>
<dbReference type="GO" id="GO:0005634">
    <property type="term" value="C:nucleus"/>
    <property type="evidence" value="ECO:0007669"/>
    <property type="project" value="TreeGrafter"/>
</dbReference>
<dbReference type="GO" id="GO:0046872">
    <property type="term" value="F:metal ion binding"/>
    <property type="evidence" value="ECO:0007669"/>
    <property type="project" value="UniProtKB-KW"/>
</dbReference>
<dbReference type="GO" id="GO:0071276">
    <property type="term" value="P:cellular response to cadmium ion"/>
    <property type="evidence" value="ECO:0007669"/>
    <property type="project" value="TreeGrafter"/>
</dbReference>
<dbReference type="GO" id="GO:0071280">
    <property type="term" value="P:cellular response to copper ion"/>
    <property type="evidence" value="ECO:0007669"/>
    <property type="project" value="TreeGrafter"/>
</dbReference>
<dbReference type="GO" id="GO:0071294">
    <property type="term" value="P:cellular response to zinc ion"/>
    <property type="evidence" value="ECO:0007669"/>
    <property type="project" value="TreeGrafter"/>
</dbReference>
<dbReference type="GO" id="GO:0010273">
    <property type="term" value="P:detoxification of copper ion"/>
    <property type="evidence" value="ECO:0007669"/>
    <property type="project" value="TreeGrafter"/>
</dbReference>
<dbReference type="GO" id="GO:0006882">
    <property type="term" value="P:intracellular zinc ion homeostasis"/>
    <property type="evidence" value="ECO:0007669"/>
    <property type="project" value="TreeGrafter"/>
</dbReference>
<dbReference type="FunFam" id="4.10.10.10:FF:000001">
    <property type="entry name" value="Metallothionein"/>
    <property type="match status" value="1"/>
</dbReference>
<dbReference type="Gene3D" id="4.10.10.10">
    <property type="entry name" value="Metallothionein Isoform II"/>
    <property type="match status" value="1"/>
</dbReference>
<dbReference type="InterPro" id="IPR017854">
    <property type="entry name" value="Metalthion_dom_sf"/>
</dbReference>
<dbReference type="InterPro" id="IPR023587">
    <property type="entry name" value="Metalthion_dom_sf_vert"/>
</dbReference>
<dbReference type="InterPro" id="IPR000006">
    <property type="entry name" value="Metalthion_vert"/>
</dbReference>
<dbReference type="PANTHER" id="PTHR23299">
    <property type="entry name" value="METALLOTHIONEIN"/>
    <property type="match status" value="1"/>
</dbReference>
<dbReference type="PANTHER" id="PTHR23299:SF24">
    <property type="entry name" value="METALLOTHIONEIN-1X"/>
    <property type="match status" value="1"/>
</dbReference>
<dbReference type="Pfam" id="PF00131">
    <property type="entry name" value="Metallothio"/>
    <property type="match status" value="1"/>
</dbReference>
<dbReference type="PRINTS" id="PR00860">
    <property type="entry name" value="MTVERTEBRATE"/>
</dbReference>
<dbReference type="SUPFAM" id="SSF57868">
    <property type="entry name" value="Metallothionein"/>
    <property type="match status" value="1"/>
</dbReference>
<proteinExistence type="evidence at transcript level"/>